<dbReference type="PIR" id="A48850">
    <property type="entry name" value="A48850"/>
</dbReference>
<dbReference type="PDB" id="1CHL">
    <property type="method" value="NMR"/>
    <property type="chains" value="A=1-36"/>
</dbReference>
<dbReference type="PDB" id="5L1C">
    <property type="method" value="NMR"/>
    <property type="chains" value="A=1-36"/>
</dbReference>
<dbReference type="PDB" id="6ATW">
    <property type="method" value="X-ray"/>
    <property type="resolution" value="1.53 A"/>
    <property type="chains" value="A=1-36"/>
</dbReference>
<dbReference type="PDB" id="7SOH">
    <property type="method" value="X-ray"/>
    <property type="resolution" value="1.81 A"/>
    <property type="chains" value="A=1-36"/>
</dbReference>
<dbReference type="PDB" id="7X41">
    <property type="method" value="X-ray"/>
    <property type="resolution" value="1.15 A"/>
    <property type="chains" value="A=1-36"/>
</dbReference>
<dbReference type="PDB" id="7X43">
    <property type="method" value="X-ray"/>
    <property type="resolution" value="1.04 A"/>
    <property type="chains" value="A=1-36"/>
</dbReference>
<dbReference type="PDB" id="7X44">
    <property type="method" value="X-ray"/>
    <property type="resolution" value="1.04 A"/>
    <property type="chains" value="A=1-36"/>
</dbReference>
<dbReference type="PDB" id="7X4D">
    <property type="method" value="X-ray"/>
    <property type="resolution" value="1.55 A"/>
    <property type="chains" value="A=1-36"/>
</dbReference>
<dbReference type="PDB" id="8C5G">
    <property type="method" value="X-ray"/>
    <property type="resolution" value="2.70 A"/>
    <property type="chains" value="C/D=1-36"/>
</dbReference>
<dbReference type="PDBsum" id="1CHL"/>
<dbReference type="PDBsum" id="5L1C"/>
<dbReference type="PDBsum" id="6ATW"/>
<dbReference type="PDBsum" id="7SOH"/>
<dbReference type="PDBsum" id="7X41"/>
<dbReference type="PDBsum" id="7X43"/>
<dbReference type="PDBsum" id="7X44"/>
<dbReference type="PDBsum" id="7X4D"/>
<dbReference type="PDBsum" id="8C5G"/>
<dbReference type="BMRB" id="P45639"/>
<dbReference type="SMR" id="P45639"/>
<dbReference type="EvolutionaryTrace" id="P45639"/>
<dbReference type="GO" id="GO:0005576">
    <property type="term" value="C:extracellular region"/>
    <property type="evidence" value="ECO:0007669"/>
    <property type="project" value="UniProtKB-SubCell"/>
</dbReference>
<dbReference type="GO" id="GO:0017081">
    <property type="term" value="F:chloride channel regulator activity"/>
    <property type="evidence" value="ECO:0007669"/>
    <property type="project" value="UniProtKB-KW"/>
</dbReference>
<dbReference type="GO" id="GO:0030414">
    <property type="term" value="F:peptidase inhibitor activity"/>
    <property type="evidence" value="ECO:0007669"/>
    <property type="project" value="UniProtKB-KW"/>
</dbReference>
<dbReference type="GO" id="GO:0090729">
    <property type="term" value="F:toxin activity"/>
    <property type="evidence" value="ECO:0007669"/>
    <property type="project" value="UniProtKB-KW"/>
</dbReference>
<dbReference type="InterPro" id="IPR036574">
    <property type="entry name" value="Scorpion_toxin-like_sf"/>
</dbReference>
<dbReference type="InterPro" id="IPR007958">
    <property type="entry name" value="Scorpion_toxinS_Cl_inh"/>
</dbReference>
<dbReference type="Pfam" id="PF05294">
    <property type="entry name" value="Toxin_5"/>
    <property type="match status" value="1"/>
</dbReference>
<dbReference type="SUPFAM" id="SSF57095">
    <property type="entry name" value="Scorpion toxin-like"/>
    <property type="match status" value="1"/>
</dbReference>
<dbReference type="PROSITE" id="PS51200">
    <property type="entry name" value="SHORT_SCORPION_CHLORIDE"/>
    <property type="match status" value="1"/>
</dbReference>
<proteinExistence type="evidence at protein level"/>
<comment type="function">
    <text evidence="2 3 5 11">This toxin binds to the surface of glioma cells, and inhibits their proliferation without having effects on normal brain cells. In this context, this toxin has been described as a chloride channel inhibitor (probably ClC-3/CLCN3) by causing its internalization via caveolae (PubMed:16520829). It has also been described to selectively interact with MMP2 (in complex with MT1-MMP (MMP14) and TIMP2), to inhibit its enzymatic activity and to decrease its presence at the cell surface (PubMed:12454020). Additionally, annexin A2 that is expressed on the surface of multiple human tumor cell lines and vascular endothelial cells in culture may be another molecular target, since surface binding of this peptide to the pancreatic tumor cell line Panc-1 is dependent on the expression of annexin A2 using siRNA-mediated specific knockdown of annexin A2 levels (PubMed:20018898).</text>
</comment>
<comment type="subcellular location">
    <subcellularLocation>
        <location evidence="11">Secreted</location>
    </subcellularLocation>
</comment>
<comment type="tissue specificity">
    <text evidence="17">Expressed by the venom gland.</text>
</comment>
<comment type="domain">
    <text evidence="10">The presence of a 'disulfide through disulfide knot' structurally defines this protein as a knottin.</text>
</comment>
<comment type="biotechnology">
    <text evidence="4 6 8 9">Is under several clinical trials (phase I, II and III) as BLZ-100 (Tozuleristide) by Blaze Bioscience Inc. as a fluorescent imaging agent that labels tumor tissue (CNS, oral cavity squamous cells, breast, skin) to enable more complete and precise surgical resection. BLZ-100 is composed of the chlorotoxin peptide covalently congujated to a derivative of the fluorescent dye indocyanine green.</text>
</comment>
<comment type="miscellaneous">
    <text evidence="15">Negative results: does not interact with MMP-1, MMP-3 and MMP-9.</text>
</comment>
<comment type="miscellaneous">
    <text evidence="16">Was tested in clinical trial under the name TM-601 for treatment of malignant glioma.</text>
</comment>
<comment type="similarity">
    <text evidence="1">Belongs to the short scorpion toxin superfamily. Chloride channel inhibitor family.</text>
</comment>
<comment type="online information" name="Wikipedia">
    <link uri="https://en.wikipedia.org/wiki/Chlorotoxin"/>
    <text>Chlorotoxin entry</text>
</comment>
<protein>
    <recommendedName>
        <fullName evidence="12 14">Chlorotoxin</fullName>
        <shortName>CTX</shortName>
        <shortName evidence="12">ClTx</shortName>
    </recommendedName>
    <innName evidence="13">Tozuleristide</innName>
</protein>
<keyword id="KW-0002">3D-structure</keyword>
<keyword id="KW-1265">Chloride channel impairing toxin</keyword>
<keyword id="KW-0903">Direct protein sequencing</keyword>
<keyword id="KW-1015">Disulfide bond</keyword>
<keyword id="KW-0872">Ion channel impairing toxin</keyword>
<keyword id="KW-0960">Knottin</keyword>
<keyword id="KW-0481">Metalloenzyme inhibitor</keyword>
<keyword id="KW-0483">Metalloprotease inhibitor</keyword>
<keyword id="KW-0528">Neurotoxin</keyword>
<keyword id="KW-0646">Protease inhibitor</keyword>
<keyword id="KW-0964">Secreted</keyword>
<keyword id="KW-0800">Toxin</keyword>
<keyword id="KW-0870">Voltage-gated chloride channel impairing toxin</keyword>
<feature type="peptide" id="PRO_0000044941" description="Chlorotoxin" evidence="11">
    <location>
        <begin position="1"/>
        <end position="36"/>
    </location>
</feature>
<feature type="disulfide bond" evidence="7 10 18 19 20">
    <location>
        <begin position="2"/>
        <end position="19"/>
    </location>
</feature>
<feature type="disulfide bond" evidence="7 10 18 19 20">
    <location>
        <begin position="5"/>
        <end position="28"/>
    </location>
</feature>
<feature type="disulfide bond" evidence="7 10 18 19 20">
    <location>
        <begin position="16"/>
        <end position="33"/>
    </location>
</feature>
<feature type="disulfide bond" evidence="7 10 18 19 20">
    <location>
        <begin position="20"/>
        <end position="35"/>
    </location>
</feature>
<feature type="strand" evidence="22">
    <location>
        <begin position="2"/>
        <end position="4"/>
    </location>
</feature>
<feature type="helix" evidence="22">
    <location>
        <begin position="12"/>
        <end position="20"/>
    </location>
</feature>
<feature type="strand" evidence="21">
    <location>
        <begin position="22"/>
        <end position="25"/>
    </location>
</feature>
<feature type="strand" evidence="22">
    <location>
        <begin position="26"/>
        <end position="29"/>
    </location>
</feature>
<feature type="strand" evidence="22">
    <location>
        <begin position="32"/>
        <end position="35"/>
    </location>
</feature>
<accession>P45639</accession>
<sequence>MCMPCFTTDHQMARKCDDCCGGKGRGKCYGPQCLCR</sequence>
<organism>
    <name type="scientific">Leiurus quinquestriatus quinquestriatus</name>
    <name type="common">Egyptian scorpion</name>
    <name type="synonym">Deathstalker scorpion</name>
    <dbReference type="NCBI Taxonomy" id="6885"/>
    <lineage>
        <taxon>Eukaryota</taxon>
        <taxon>Metazoa</taxon>
        <taxon>Ecdysozoa</taxon>
        <taxon>Arthropoda</taxon>
        <taxon>Chelicerata</taxon>
        <taxon>Arachnida</taxon>
        <taxon>Scorpiones</taxon>
        <taxon>Buthida</taxon>
        <taxon>Buthoidea</taxon>
        <taxon>Buthidae</taxon>
        <taxon>Leiurus</taxon>
    </lineage>
</organism>
<evidence type="ECO:0000255" key="1">
    <source>
        <dbReference type="PROSITE-ProRule" id="PRU00545"/>
    </source>
</evidence>
<evidence type="ECO:0000269" key="2">
    <source>
    </source>
</evidence>
<evidence type="ECO:0000269" key="3">
    <source>
    </source>
</evidence>
<evidence type="ECO:0000269" key="4">
    <source>
    </source>
</evidence>
<evidence type="ECO:0000269" key="5">
    <source>
    </source>
</evidence>
<evidence type="ECO:0000269" key="6">
    <source>
    </source>
</evidence>
<evidence type="ECO:0000269" key="7">
    <source>
    </source>
</evidence>
<evidence type="ECO:0000269" key="8">
    <source>
    </source>
</evidence>
<evidence type="ECO:0000269" key="9">
    <source>
    </source>
</evidence>
<evidence type="ECO:0000269" key="10">
    <source>
    </source>
</evidence>
<evidence type="ECO:0000269" key="11">
    <source>
    </source>
</evidence>
<evidence type="ECO:0000303" key="12">
    <source>
    </source>
</evidence>
<evidence type="ECO:0000303" key="13">
    <source>
    </source>
</evidence>
<evidence type="ECO:0000303" key="14">
    <source>
    </source>
</evidence>
<evidence type="ECO:0000305" key="15">
    <source>
    </source>
</evidence>
<evidence type="ECO:0000305" key="16">
    <source>
    </source>
</evidence>
<evidence type="ECO:0000305" key="17">
    <source>
    </source>
</evidence>
<evidence type="ECO:0000312" key="18">
    <source>
        <dbReference type="PDB" id="1CHL"/>
    </source>
</evidence>
<evidence type="ECO:0000312" key="19">
    <source>
        <dbReference type="PDB" id="5L1C"/>
    </source>
</evidence>
<evidence type="ECO:0000312" key="20">
    <source>
        <dbReference type="PDB" id="6ATW"/>
    </source>
</evidence>
<evidence type="ECO:0007829" key="21">
    <source>
        <dbReference type="PDB" id="1CHL"/>
    </source>
</evidence>
<evidence type="ECO:0007829" key="22">
    <source>
        <dbReference type="PDB" id="7X43"/>
    </source>
</evidence>
<reference key="1">
    <citation type="journal article" date="1993" name="Am. J. Physiol.">
        <title>Purification and characterization of chlorotoxin, a chloride channel ligand from the venom of the scorpion.</title>
        <authorList>
            <person name="Debin J.A."/>
            <person name="Maggio J.E."/>
            <person name="Strichartz G.R."/>
        </authorList>
    </citation>
    <scope>PROTEIN SEQUENCE</scope>
    <scope>FUNCTION</scope>
    <scope>SUBCELLULAR LOCATION</scope>
    <source>
        <tissue>Venom</tissue>
    </source>
</reference>
<reference key="2">
    <citation type="journal article" date="2003" name="J. Biol. Chem.">
        <title>Chlorotoxin inhibits glioma cell invasion via matrix metalloproteinase-2.</title>
        <authorList>
            <person name="Deshane J."/>
            <person name="Garner C.C."/>
            <person name="Sontheimer H."/>
        </authorList>
    </citation>
    <scope>FUNCTION AS MMP-2 BINDING TOXIN</scope>
</reference>
<reference key="3">
    <citation type="journal article" date="2006" name="Neuron Glia Biol.">
        <title>A role for ion channels in glioma cell invasion.</title>
        <authorList>
            <person name="McFerrin M.B."/>
            <person name="Sontheimer H."/>
        </authorList>
    </citation>
    <scope>PROBABLE FUNCTION AS CLC3 INHIBITOR</scope>
    <scope>REVIEW</scope>
</reference>
<reference key="4">
    <citation type="journal article" date="2006" name="J. Clin. Oncol.">
        <title>Phase I single-dose study of intracavitary-administered iodine-131-TM-601 in adults with recurrent high-grade glioma.</title>
        <authorList>
            <person name="Mamelak A.N."/>
            <person name="Rosenfeld S."/>
            <person name="Bucholz R."/>
            <person name="Raubitschek A."/>
            <person name="Nabors L.B."/>
            <person name="Fiveash J.B."/>
            <person name="Shen S."/>
            <person name="Khazaeli M.B."/>
            <person name="Colcher D."/>
            <person name="Liu A."/>
            <person name="Osman M."/>
            <person name="Guthrie B."/>
            <person name="Schade-Bijur S."/>
            <person name="Hablitz D.M."/>
            <person name="Alvarez V.L."/>
            <person name="Gonda M.A."/>
        </authorList>
    </citation>
    <scope>TREATMENT OF MALIGNANT GLIOMA</scope>
</reference>
<reference key="5">
    <citation type="journal article" date="2007" name="Cancer Res.">
        <title>Tumor paint: a chlorotoxin:Cy5.5 bioconjugate for intraoperative visualization of cancer foci.</title>
        <authorList>
            <person name="Veiseh M."/>
            <person name="Gabikian P."/>
            <person name="Bahrami S.B."/>
            <person name="Veiseh O."/>
            <person name="Zhang M."/>
            <person name="Hackman R.C."/>
            <person name="Ravanpay A.C."/>
            <person name="Stroud M.R."/>
            <person name="Kusuma Y."/>
            <person name="Hansen S.J."/>
            <person name="Kwok D."/>
            <person name="Munoz N.M."/>
            <person name="Sze R.W."/>
            <person name="Grady W.M."/>
            <person name="Greenberg N.M."/>
            <person name="Ellenbogen R.G."/>
            <person name="Olson J.M."/>
        </authorList>
    </citation>
    <scope>BIOTECHNOLOGY</scope>
</reference>
<reference key="6">
    <citation type="journal article" date="2010" name="J. Biol. Chem.">
        <title>Annexin A2 is a molecular target for TM601, a peptide with tumor-targeting and anti-angiogenic effects.</title>
        <authorList>
            <person name="Kesavan K."/>
            <person name="Ratliff J."/>
            <person name="Johnson E.W."/>
            <person name="Dahlberg W."/>
            <person name="Asara J.M."/>
            <person name="Misra P."/>
            <person name="Frangioni J.V."/>
            <person name="Jacoby D.B."/>
        </authorList>
    </citation>
    <scope>FUNCTION ON ANNEXIN A2</scope>
</reference>
<reference key="7">
    <citation type="journal article" date="2017" name="Int. J. Toxicol.">
        <title>Nonclinical profile of BLZ-100, a tumor-targeting fluorescent imaging agent.</title>
        <authorList>
            <person name="Parrish-Novak J."/>
            <person name="Byrnes-Blake K."/>
            <person name="Lalayeva N."/>
            <person name="Burleson S."/>
            <person name="Fidel J."/>
            <person name="Gilmore R."/>
            <person name="Gayheart-Walsten P."/>
            <person name="Bricker G.A."/>
            <person name="Crumb W.J. Jr."/>
            <person name="Tarlo K.S."/>
            <person name="Hansen S."/>
            <person name="Wiss V."/>
            <person name="Malta E."/>
            <person name="Dernell W.S."/>
            <person name="Olson J.M."/>
            <person name="Miller D.M."/>
        </authorList>
    </citation>
    <scope>BIOTECHNOLOGY</scope>
</reference>
<reference key="8">
    <citation type="journal article" date="2019" name="Arch. Pathol. Lab. Med.">
        <title>Real-time visualization of breast carcinoma in pathology specimens from patients receiving fluorescent tumor-marking agent tozuleristide.</title>
        <authorList>
            <person name="Dintzis S.M."/>
            <person name="Hansen S."/>
            <person name="Harrington K.M."/>
            <person name="Tan L.C."/>
            <person name="Miller D.M."/>
            <person name="Ishak L."/>
            <person name="Parrish-Novak J."/>
            <person name="Kittle D."/>
            <person name="Perry J."/>
            <person name="Gombotz C."/>
            <person name="Fortney T."/>
            <person name="Porenta S."/>
            <person name="Hales L."/>
            <person name="Calhoun K.E."/>
            <person name="Anderson B.O."/>
            <person name="Javid S.H."/>
            <person name="Byrd D.R."/>
        </authorList>
    </citation>
    <scope>BIOTECHNOLOGY</scope>
</reference>
<reference key="9">
    <citation type="journal article" date="2021" name="Contemp. Clin. Trials. Commun.">
        <title>A first-in-human study of BLZ-100 (tozuleristide) demonstrates tolerability and safety in skin cancer patients.</title>
        <authorList>
            <person name="Yamada M."/>
            <person name="Miller D.M."/>
            <person name="Lowe M."/>
            <person name="Rowe C."/>
            <person name="Wood D."/>
            <person name="Soyer H.P."/>
            <person name="Byrnes-Blake K."/>
            <person name="Parrish-Novak J."/>
            <person name="Ishak L."/>
            <person name="Olson J.M."/>
            <person name="Brandt G."/>
            <person name="Griffin P."/>
            <person name="Spelman L."/>
            <person name="Prow T.W."/>
        </authorList>
    </citation>
    <scope>BIOTECHNOLOGY</scope>
</reference>
<reference key="10">
    <citation type="journal article" date="1995" name="Biochemistry">
        <title>NMR sequential assignments and solution structure of chlorotoxin, a small scorpion toxin that blocks chloride channels.</title>
        <authorList>
            <person name="Lippens G."/>
            <person name="Najib J."/>
            <person name="Wodak S.J."/>
            <person name="Tartar A."/>
        </authorList>
    </citation>
    <scope>STRUCTURE BY NMR</scope>
    <scope>DISULFIDE BONDS</scope>
</reference>
<reference key="11">
    <citation type="journal article" date="2018" name="Nat. Struct. Mol. Biol.">
        <title>Screening, large-scale production and structure-based classification of cystine-dense peptides.</title>
        <authorList>
            <person name="Correnti C.E."/>
            <person name="Gewe M.M."/>
            <person name="Mehlin C."/>
            <person name="Bandaranayake A.D."/>
            <person name="Johnsen W.A."/>
            <person name="Rupert P.B."/>
            <person name="Brusniak M.Y."/>
            <person name="Clarke M."/>
            <person name="Burke S.E."/>
            <person name="De Van Der Schueren W."/>
            <person name="Pilat K."/>
            <person name="Turnbaugh S.M."/>
            <person name="May D."/>
            <person name="Watson A."/>
            <person name="Chan M.K."/>
            <person name="Bahl C.D."/>
            <person name="Olson J.M."/>
            <person name="Strong R.K."/>
        </authorList>
    </citation>
    <scope>X-RAY CRYSTALLOGRAPHY (1.53 ANGSTROMS)</scope>
    <scope>SYNTHESIS</scope>
    <scope>DISULFIDE BONDS</scope>
</reference>
<name>CTXL_LEIQU</name>